<sequence length="62" mass="6977">MGKQCFVTGRKASTGNRRSHALNSTKRRWNANLQKVRILVDGKPKKVWVSARALKSGKVTRV</sequence>
<comment type="similarity">
    <text evidence="1">Belongs to the bacterial ribosomal protein bL28 family.</text>
</comment>
<gene>
    <name evidence="1" type="primary">rpmB</name>
    <name type="ordered locus">SACOL1238</name>
</gene>
<proteinExistence type="inferred from homology"/>
<evidence type="ECO:0000255" key="1">
    <source>
        <dbReference type="HAMAP-Rule" id="MF_00373"/>
    </source>
</evidence>
<evidence type="ECO:0000256" key="2">
    <source>
        <dbReference type="SAM" id="MobiDB-lite"/>
    </source>
</evidence>
<evidence type="ECO:0000305" key="3"/>
<reference key="1">
    <citation type="journal article" date="2005" name="J. Bacteriol.">
        <title>Insights on evolution of virulence and resistance from the complete genome analysis of an early methicillin-resistant Staphylococcus aureus strain and a biofilm-producing methicillin-resistant Staphylococcus epidermidis strain.</title>
        <authorList>
            <person name="Gill S.R."/>
            <person name="Fouts D.E."/>
            <person name="Archer G.L."/>
            <person name="Mongodin E.F."/>
            <person name="DeBoy R.T."/>
            <person name="Ravel J."/>
            <person name="Paulsen I.T."/>
            <person name="Kolonay J.F."/>
            <person name="Brinkac L.M."/>
            <person name="Beanan M.J."/>
            <person name="Dodson R.J."/>
            <person name="Daugherty S.C."/>
            <person name="Madupu R."/>
            <person name="Angiuoli S.V."/>
            <person name="Durkin A.S."/>
            <person name="Haft D.H."/>
            <person name="Vamathevan J.J."/>
            <person name="Khouri H."/>
            <person name="Utterback T.R."/>
            <person name="Lee C."/>
            <person name="Dimitrov G."/>
            <person name="Jiang L."/>
            <person name="Qin H."/>
            <person name="Weidman J."/>
            <person name="Tran K."/>
            <person name="Kang K.H."/>
            <person name="Hance I.R."/>
            <person name="Nelson K.E."/>
            <person name="Fraser C.M."/>
        </authorList>
    </citation>
    <scope>NUCLEOTIDE SEQUENCE [LARGE SCALE GENOMIC DNA]</scope>
    <source>
        <strain>COL</strain>
    </source>
</reference>
<feature type="chain" id="PRO_0000178548" description="Large ribosomal subunit protein bL28">
    <location>
        <begin position="1"/>
        <end position="62"/>
    </location>
</feature>
<feature type="region of interest" description="Disordered" evidence="2">
    <location>
        <begin position="1"/>
        <end position="22"/>
    </location>
</feature>
<keyword id="KW-0687">Ribonucleoprotein</keyword>
<keyword id="KW-0689">Ribosomal protein</keyword>
<dbReference type="EMBL" id="CP000046">
    <property type="protein sequence ID" value="AAW38072.1"/>
    <property type="molecule type" value="Genomic_DNA"/>
</dbReference>
<dbReference type="RefSeq" id="WP_000517908.1">
    <property type="nucleotide sequence ID" value="NZ_JBGOFO010000002.1"/>
</dbReference>
<dbReference type="SMR" id="Q5HGK9"/>
<dbReference type="GeneID" id="98345539"/>
<dbReference type="KEGG" id="sac:SACOL1238"/>
<dbReference type="HOGENOM" id="CLU_064548_7_1_9"/>
<dbReference type="Proteomes" id="UP000000530">
    <property type="component" value="Chromosome"/>
</dbReference>
<dbReference type="GO" id="GO:1990904">
    <property type="term" value="C:ribonucleoprotein complex"/>
    <property type="evidence" value="ECO:0007669"/>
    <property type="project" value="UniProtKB-KW"/>
</dbReference>
<dbReference type="GO" id="GO:0005840">
    <property type="term" value="C:ribosome"/>
    <property type="evidence" value="ECO:0007669"/>
    <property type="project" value="UniProtKB-KW"/>
</dbReference>
<dbReference type="GO" id="GO:0003735">
    <property type="term" value="F:structural constituent of ribosome"/>
    <property type="evidence" value="ECO:0007669"/>
    <property type="project" value="InterPro"/>
</dbReference>
<dbReference type="GO" id="GO:0006412">
    <property type="term" value="P:translation"/>
    <property type="evidence" value="ECO:0007669"/>
    <property type="project" value="UniProtKB-UniRule"/>
</dbReference>
<dbReference type="Gene3D" id="2.30.170.40">
    <property type="entry name" value="Ribosomal protein L28/L24"/>
    <property type="match status" value="1"/>
</dbReference>
<dbReference type="HAMAP" id="MF_00373">
    <property type="entry name" value="Ribosomal_bL28"/>
    <property type="match status" value="1"/>
</dbReference>
<dbReference type="InterPro" id="IPR050096">
    <property type="entry name" value="Bacterial_rp_bL28"/>
</dbReference>
<dbReference type="InterPro" id="IPR026569">
    <property type="entry name" value="Ribosomal_bL28"/>
</dbReference>
<dbReference type="InterPro" id="IPR034704">
    <property type="entry name" value="Ribosomal_bL28/bL31-like_sf"/>
</dbReference>
<dbReference type="InterPro" id="IPR001383">
    <property type="entry name" value="Ribosomal_bL28_bact-type"/>
</dbReference>
<dbReference type="InterPro" id="IPR037147">
    <property type="entry name" value="Ribosomal_bL28_sf"/>
</dbReference>
<dbReference type="NCBIfam" id="TIGR00009">
    <property type="entry name" value="L28"/>
    <property type="match status" value="1"/>
</dbReference>
<dbReference type="PANTHER" id="PTHR39080">
    <property type="entry name" value="50S RIBOSOMAL PROTEIN L28"/>
    <property type="match status" value="1"/>
</dbReference>
<dbReference type="PANTHER" id="PTHR39080:SF1">
    <property type="entry name" value="LARGE RIBOSOMAL SUBUNIT PROTEIN BL28A"/>
    <property type="match status" value="1"/>
</dbReference>
<dbReference type="Pfam" id="PF00830">
    <property type="entry name" value="Ribosomal_L28"/>
    <property type="match status" value="1"/>
</dbReference>
<dbReference type="SUPFAM" id="SSF143800">
    <property type="entry name" value="L28p-like"/>
    <property type="match status" value="1"/>
</dbReference>
<organism>
    <name type="scientific">Staphylococcus aureus (strain COL)</name>
    <dbReference type="NCBI Taxonomy" id="93062"/>
    <lineage>
        <taxon>Bacteria</taxon>
        <taxon>Bacillati</taxon>
        <taxon>Bacillota</taxon>
        <taxon>Bacilli</taxon>
        <taxon>Bacillales</taxon>
        <taxon>Staphylococcaceae</taxon>
        <taxon>Staphylococcus</taxon>
    </lineage>
</organism>
<accession>Q5HGK9</accession>
<protein>
    <recommendedName>
        <fullName evidence="1">Large ribosomal subunit protein bL28</fullName>
    </recommendedName>
    <alternativeName>
        <fullName evidence="3">50S ribosomal protein L28</fullName>
    </alternativeName>
</protein>
<name>RL28_STAAC</name>